<comment type="sequence caution" evidence="4">
    <conflict type="erroneous initiation">
        <sequence resource="EMBL-CDS" id="BAC85608"/>
    </conflict>
    <text>Truncated N-terminus.</text>
</comment>
<comment type="sequence caution" evidence="4">
    <conflict type="erroneous initiation">
        <sequence resource="EMBL-CDS" id="BAC87128"/>
    </conflict>
    <text>Truncated N-terminus.</text>
</comment>
<comment type="sequence caution" evidence="4">
    <conflict type="frameshift">
        <sequence resource="EMBL-CDS" id="BAC87128"/>
    </conflict>
</comment>
<keyword id="KW-0175">Coiled coil</keyword>
<keyword id="KW-0479">Metal-binding</keyword>
<keyword id="KW-0597">Phosphoprotein</keyword>
<keyword id="KW-1267">Proteomics identification</keyword>
<keyword id="KW-1185">Reference proteome</keyword>
<keyword id="KW-0677">Repeat</keyword>
<keyword id="KW-0862">Zinc</keyword>
<keyword id="KW-0863">Zinc-finger</keyword>
<evidence type="ECO:0000255" key="1"/>
<evidence type="ECO:0000255" key="2">
    <source>
        <dbReference type="PROSITE-ProRule" id="PRU00723"/>
    </source>
</evidence>
<evidence type="ECO:0000256" key="3">
    <source>
        <dbReference type="SAM" id="MobiDB-lite"/>
    </source>
</evidence>
<evidence type="ECO:0000305" key="4"/>
<evidence type="ECO:0007744" key="5">
    <source>
    </source>
</evidence>
<sequence>MTDSEHAGHDREDGELEDGEIDDAGFEEIQEKEAKENEKQKSEKAYRKSRKKHKKEREKKKSKRRKREKHKHNSPSSDDSSDYSLDSDVEHTESSHKKRTGFYRDYDIPFTQRGHISGSYITSKKGQHNKKFKSKEYDEYSTYSDDNFGNYSDDNFGNYGQETEEDFANQLKQYRQAKETSNIALGSSFSKESGKKQRMKGVQQGIEQRVKSFNVGRGRGLPKKIKRKERGGRTNKGPNVFSVSDDFQEYNKPGKKWKVMTQEFINQHTVEHKGKQICKYFLEGRCIKGDQCKFDHDAELEKRKEICKFYLQGYCTKGENCIYMHNEFPCKFYHSGAKCYQGDNCKFSHDDLTKETKKLLDKVLNTDEELINEDERELEELRKRGITPLPKPPPGVGLLPTPPEHFPFSDPEDDFQTDFSDDFRKIPSLFEIVVKPTVDLAHKIGRKPPAFYTSASPPGPQFQGSSPHPQHIYSSGSSPGPGPNMSQGHSSPVMHPGSPGHHPCAGPPGLPVPQSPPLPPGPPEIVGPQNQAGVLVQPDTSLTPPSMGGAYHSPGFPGHVMKVPRENHCSPGSSYQQSPGEMQLNTNYESLQNPAEFYDNYYAQHSIHNFQPPNNSGDGMWHGEFAQQQPPVVQDSPNHGSGSDGSSTRTGHGPLPVPGLLPAVQRALFVRLTQRYQEDEEQTSTQPHRAPSKEEDDTVNWYSSSEEEEGSSVKSILKTLQKQTETLRNQQQPSTELSTPTDPRLAKEKSKGNQVVDPRLRTIPRQDIRKPSESAPLDLRLAWDPRKLRGNGSGHIGSSVGGAKFDLHHANAGTNVKHKRGDDDDEDTERELREKAFLIPLDASPGIMLQDPRSQLRQFSHIKMDITLTKPNFAKHIVWAPEDLLPVPLPKPDPVSSINLPLPPLIADQRLNRLWNTKSDLHQNTVSIDPKLAAKAKINTTNREGYLEQFGDSHGSGAKLGDPRLQKNFDPRLHRLPNTESHQVVMKDSHASKGAPHLPRSNPGSSQPSGAGTSNSGSGALPPYAPKLSSSAGLPLGTSTSVLSGISLYDPRDHGSSSTSELATASSGENSKNQKKSGGLKSSDKTEPSPGEAILPQKPSPNVGVTLEGPADPQADVPRSSGKVQVPAVHSLPVQALTGLIRPQYSDPRQARQPGQGSPTPDNDPGRETDDKSLKEVFKTFDPTASPFC</sequence>
<protein>
    <recommendedName>
        <fullName>Zinc finger CCCH domain-containing protein 6</fullName>
    </recommendedName>
</protein>
<reference key="1">
    <citation type="journal article" date="2005" name="Nature">
        <title>Generation and annotation of the DNA sequences of human chromosomes 2 and 4.</title>
        <authorList>
            <person name="Hillier L.W."/>
            <person name="Graves T.A."/>
            <person name="Fulton R.S."/>
            <person name="Fulton L.A."/>
            <person name="Pepin K.H."/>
            <person name="Minx P."/>
            <person name="Wagner-McPherson C."/>
            <person name="Layman D."/>
            <person name="Wylie K."/>
            <person name="Sekhon M."/>
            <person name="Becker M.C."/>
            <person name="Fewell G.A."/>
            <person name="Delehaunty K.D."/>
            <person name="Miner T.L."/>
            <person name="Nash W.E."/>
            <person name="Kremitzki C."/>
            <person name="Oddy L."/>
            <person name="Du H."/>
            <person name="Sun H."/>
            <person name="Bradshaw-Cordum H."/>
            <person name="Ali J."/>
            <person name="Carter J."/>
            <person name="Cordes M."/>
            <person name="Harris A."/>
            <person name="Isak A."/>
            <person name="van Brunt A."/>
            <person name="Nguyen C."/>
            <person name="Du F."/>
            <person name="Courtney L."/>
            <person name="Kalicki J."/>
            <person name="Ozersky P."/>
            <person name="Abbott S."/>
            <person name="Armstrong J."/>
            <person name="Belter E.A."/>
            <person name="Caruso L."/>
            <person name="Cedroni M."/>
            <person name="Cotton M."/>
            <person name="Davidson T."/>
            <person name="Desai A."/>
            <person name="Elliott G."/>
            <person name="Erb T."/>
            <person name="Fronick C."/>
            <person name="Gaige T."/>
            <person name="Haakenson W."/>
            <person name="Haglund K."/>
            <person name="Holmes A."/>
            <person name="Harkins R."/>
            <person name="Kim K."/>
            <person name="Kruchowski S.S."/>
            <person name="Strong C.M."/>
            <person name="Grewal N."/>
            <person name="Goyea E."/>
            <person name="Hou S."/>
            <person name="Levy A."/>
            <person name="Martinka S."/>
            <person name="Mead K."/>
            <person name="McLellan M.D."/>
            <person name="Meyer R."/>
            <person name="Randall-Maher J."/>
            <person name="Tomlinson C."/>
            <person name="Dauphin-Kohlberg S."/>
            <person name="Kozlowicz-Reilly A."/>
            <person name="Shah N."/>
            <person name="Swearengen-Shahid S."/>
            <person name="Snider J."/>
            <person name="Strong J.T."/>
            <person name="Thompson J."/>
            <person name="Yoakum M."/>
            <person name="Leonard S."/>
            <person name="Pearman C."/>
            <person name="Trani L."/>
            <person name="Radionenko M."/>
            <person name="Waligorski J.E."/>
            <person name="Wang C."/>
            <person name="Rock S.M."/>
            <person name="Tin-Wollam A.-M."/>
            <person name="Maupin R."/>
            <person name="Latreille P."/>
            <person name="Wendl M.C."/>
            <person name="Yang S.-P."/>
            <person name="Pohl C."/>
            <person name="Wallis J.W."/>
            <person name="Spieth J."/>
            <person name="Bieri T.A."/>
            <person name="Berkowicz N."/>
            <person name="Nelson J.O."/>
            <person name="Osborne J."/>
            <person name="Ding L."/>
            <person name="Meyer R."/>
            <person name="Sabo A."/>
            <person name="Shotland Y."/>
            <person name="Sinha P."/>
            <person name="Wohldmann P.E."/>
            <person name="Cook L.L."/>
            <person name="Hickenbotham M.T."/>
            <person name="Eldred J."/>
            <person name="Williams D."/>
            <person name="Jones T.A."/>
            <person name="She X."/>
            <person name="Ciccarelli F.D."/>
            <person name="Izaurralde E."/>
            <person name="Taylor J."/>
            <person name="Schmutz J."/>
            <person name="Myers R.M."/>
            <person name="Cox D.R."/>
            <person name="Huang X."/>
            <person name="McPherson J.D."/>
            <person name="Mardis E.R."/>
            <person name="Clifton S.W."/>
            <person name="Warren W.C."/>
            <person name="Chinwalla A.T."/>
            <person name="Eddy S.R."/>
            <person name="Marra M.A."/>
            <person name="Ovcharenko I."/>
            <person name="Furey T.S."/>
            <person name="Miller W."/>
            <person name="Eichler E.E."/>
            <person name="Bork P."/>
            <person name="Suyama M."/>
            <person name="Torrents D."/>
            <person name="Waterston R.H."/>
            <person name="Wilson R.K."/>
        </authorList>
    </citation>
    <scope>NUCLEOTIDE SEQUENCE [LARGE SCALE GENOMIC DNA]</scope>
</reference>
<reference key="2">
    <citation type="submission" date="2003-06" db="EMBL/GenBank/DDBJ databases">
        <title>The nucleotide sequence of a long cDNA clone isolated from human.</title>
        <authorList>
            <person name="Nagase T."/>
            <person name="Kikuno R."/>
            <person name="Yamakawa H."/>
            <person name="Ohara O."/>
        </authorList>
    </citation>
    <scope>NUCLEOTIDE SEQUENCE [LARGE SCALE MRNA] OF 55-1189</scope>
    <source>
        <tissue>Brain</tissue>
    </source>
</reference>
<reference key="3">
    <citation type="journal article" date="2004" name="Genome Res.">
        <title>The status, quality, and expansion of the NIH full-length cDNA project: the Mammalian Gene Collection (MGC).</title>
        <authorList>
            <consortium name="The MGC Project Team"/>
        </authorList>
    </citation>
    <scope>NUCLEOTIDE SEQUENCE [LARGE SCALE MRNA] OF 55-1189</scope>
</reference>
<reference key="4">
    <citation type="journal article" date="2004" name="Nat. Genet.">
        <title>Complete sequencing and characterization of 21,243 full-length human cDNAs.</title>
        <authorList>
            <person name="Ota T."/>
            <person name="Suzuki Y."/>
            <person name="Nishikawa T."/>
            <person name="Otsuki T."/>
            <person name="Sugiyama T."/>
            <person name="Irie R."/>
            <person name="Wakamatsu A."/>
            <person name="Hayashi K."/>
            <person name="Sato H."/>
            <person name="Nagai K."/>
            <person name="Kimura K."/>
            <person name="Makita H."/>
            <person name="Sekine M."/>
            <person name="Obayashi M."/>
            <person name="Nishi T."/>
            <person name="Shibahara T."/>
            <person name="Tanaka T."/>
            <person name="Ishii S."/>
            <person name="Yamamoto J."/>
            <person name="Saito K."/>
            <person name="Kawai Y."/>
            <person name="Isono Y."/>
            <person name="Nakamura Y."/>
            <person name="Nagahari K."/>
            <person name="Murakami K."/>
            <person name="Yasuda T."/>
            <person name="Iwayanagi T."/>
            <person name="Wagatsuma M."/>
            <person name="Shiratori A."/>
            <person name="Sudo H."/>
            <person name="Hosoiri T."/>
            <person name="Kaku Y."/>
            <person name="Kodaira H."/>
            <person name="Kondo H."/>
            <person name="Sugawara M."/>
            <person name="Takahashi M."/>
            <person name="Kanda K."/>
            <person name="Yokoi T."/>
            <person name="Furuya T."/>
            <person name="Kikkawa E."/>
            <person name="Omura Y."/>
            <person name="Abe K."/>
            <person name="Kamihara K."/>
            <person name="Katsuta N."/>
            <person name="Sato K."/>
            <person name="Tanikawa M."/>
            <person name="Yamazaki M."/>
            <person name="Ninomiya K."/>
            <person name="Ishibashi T."/>
            <person name="Yamashita H."/>
            <person name="Murakawa K."/>
            <person name="Fujimori K."/>
            <person name="Tanai H."/>
            <person name="Kimata M."/>
            <person name="Watanabe M."/>
            <person name="Hiraoka S."/>
            <person name="Chiba Y."/>
            <person name="Ishida S."/>
            <person name="Ono Y."/>
            <person name="Takiguchi S."/>
            <person name="Watanabe S."/>
            <person name="Yosida M."/>
            <person name="Hotuta T."/>
            <person name="Kusano J."/>
            <person name="Kanehori K."/>
            <person name="Takahashi-Fujii A."/>
            <person name="Hara H."/>
            <person name="Tanase T.-O."/>
            <person name="Nomura Y."/>
            <person name="Togiya S."/>
            <person name="Komai F."/>
            <person name="Hara R."/>
            <person name="Takeuchi K."/>
            <person name="Arita M."/>
            <person name="Imose N."/>
            <person name="Musashino K."/>
            <person name="Yuuki H."/>
            <person name="Oshima A."/>
            <person name="Sasaki N."/>
            <person name="Aotsuka S."/>
            <person name="Yoshikawa Y."/>
            <person name="Matsunawa H."/>
            <person name="Ichihara T."/>
            <person name="Shiohata N."/>
            <person name="Sano S."/>
            <person name="Moriya S."/>
            <person name="Momiyama H."/>
            <person name="Satoh N."/>
            <person name="Takami S."/>
            <person name="Terashima Y."/>
            <person name="Suzuki O."/>
            <person name="Nakagawa S."/>
            <person name="Senoh A."/>
            <person name="Mizoguchi H."/>
            <person name="Goto Y."/>
            <person name="Shimizu F."/>
            <person name="Wakebe H."/>
            <person name="Hishigaki H."/>
            <person name="Watanabe T."/>
            <person name="Sugiyama A."/>
            <person name="Takemoto M."/>
            <person name="Kawakami B."/>
            <person name="Yamazaki M."/>
            <person name="Watanabe K."/>
            <person name="Kumagai A."/>
            <person name="Itakura S."/>
            <person name="Fukuzumi Y."/>
            <person name="Fujimori Y."/>
            <person name="Komiyama M."/>
            <person name="Tashiro H."/>
            <person name="Tanigami A."/>
            <person name="Fujiwara T."/>
            <person name="Ono T."/>
            <person name="Yamada K."/>
            <person name="Fujii Y."/>
            <person name="Ozaki K."/>
            <person name="Hirao M."/>
            <person name="Ohmori Y."/>
            <person name="Kawabata A."/>
            <person name="Hikiji T."/>
            <person name="Kobatake N."/>
            <person name="Inagaki H."/>
            <person name="Ikema Y."/>
            <person name="Okamoto S."/>
            <person name="Okitani R."/>
            <person name="Kawakami T."/>
            <person name="Noguchi S."/>
            <person name="Itoh T."/>
            <person name="Shigeta K."/>
            <person name="Senba T."/>
            <person name="Matsumura K."/>
            <person name="Nakajima Y."/>
            <person name="Mizuno T."/>
            <person name="Morinaga M."/>
            <person name="Sasaki M."/>
            <person name="Togashi T."/>
            <person name="Oyama M."/>
            <person name="Hata H."/>
            <person name="Watanabe M."/>
            <person name="Komatsu T."/>
            <person name="Mizushima-Sugano J."/>
            <person name="Satoh T."/>
            <person name="Shirai Y."/>
            <person name="Takahashi Y."/>
            <person name="Nakagawa K."/>
            <person name="Okumura K."/>
            <person name="Nagase T."/>
            <person name="Nomura N."/>
            <person name="Kikuchi H."/>
            <person name="Masuho Y."/>
            <person name="Yamashita R."/>
            <person name="Nakai K."/>
            <person name="Yada T."/>
            <person name="Nakamura Y."/>
            <person name="Ohara O."/>
            <person name="Isogai T."/>
            <person name="Sugano S."/>
        </authorList>
    </citation>
    <scope>NUCLEOTIDE SEQUENCE [LARGE SCALE MRNA] OF 180-1189</scope>
    <source>
        <tissue>Fetal brain</tissue>
        <tissue>Hippocampus</tissue>
    </source>
</reference>
<reference key="5">
    <citation type="journal article" date="2013" name="J. Proteome Res.">
        <title>Toward a comprehensive characterization of a human cancer cell phosphoproteome.</title>
        <authorList>
            <person name="Zhou H."/>
            <person name="Di Palma S."/>
            <person name="Preisinger C."/>
            <person name="Peng M."/>
            <person name="Polat A.N."/>
            <person name="Heck A.J."/>
            <person name="Mohammed S."/>
        </authorList>
    </citation>
    <scope>PHOSPHORYLATION [LARGE SCALE ANALYSIS] AT SER-1158</scope>
    <scope>IDENTIFICATION BY MASS SPECTROMETRY [LARGE SCALE ANALYSIS]</scope>
    <source>
        <tissue>Erythroleukemia</tissue>
    </source>
</reference>
<accession>P61129</accession>
<accession>A9JR71</accession>
<accession>Q6ZW96</accession>
<name>ZC3H6_HUMAN</name>
<feature type="chain" id="PRO_0000213901" description="Zinc finger CCCH domain-containing protein 6">
    <location>
        <begin position="1"/>
        <end position="1189"/>
    </location>
</feature>
<feature type="zinc finger region" description="C3H1-type 1" evidence="2">
    <location>
        <begin position="273"/>
        <end position="299"/>
    </location>
</feature>
<feature type="zinc finger region" description="C3H1-type 2" evidence="2">
    <location>
        <begin position="301"/>
        <end position="328"/>
    </location>
</feature>
<feature type="zinc finger region" description="C3H1-type 3" evidence="2">
    <location>
        <begin position="329"/>
        <end position="352"/>
    </location>
</feature>
<feature type="region of interest" description="Disordered" evidence="3">
    <location>
        <begin position="1"/>
        <end position="105"/>
    </location>
</feature>
<feature type="region of interest" description="Disordered" evidence="3">
    <location>
        <begin position="451"/>
        <end position="530"/>
    </location>
</feature>
<feature type="region of interest" description="Disordered" evidence="3">
    <location>
        <begin position="630"/>
        <end position="659"/>
    </location>
</feature>
<feature type="region of interest" description="Disordered" evidence="3">
    <location>
        <begin position="676"/>
        <end position="755"/>
    </location>
</feature>
<feature type="region of interest" description="Disordered" evidence="3">
    <location>
        <begin position="947"/>
        <end position="1026"/>
    </location>
</feature>
<feature type="region of interest" description="Disordered" evidence="3">
    <location>
        <begin position="1051"/>
        <end position="1189"/>
    </location>
</feature>
<feature type="coiled-coil region" evidence="1">
    <location>
        <begin position="27"/>
        <end position="73"/>
    </location>
</feature>
<feature type="coiled-coil region" evidence="1">
    <location>
        <begin position="353"/>
        <end position="385"/>
    </location>
</feature>
<feature type="compositionally biased region" description="Basic and acidic residues" evidence="3">
    <location>
        <begin position="1"/>
        <end position="12"/>
    </location>
</feature>
<feature type="compositionally biased region" description="Acidic residues" evidence="3">
    <location>
        <begin position="13"/>
        <end position="28"/>
    </location>
</feature>
<feature type="compositionally biased region" description="Basic and acidic residues" evidence="3">
    <location>
        <begin position="29"/>
        <end position="46"/>
    </location>
</feature>
<feature type="compositionally biased region" description="Basic residues" evidence="3">
    <location>
        <begin position="47"/>
        <end position="73"/>
    </location>
</feature>
<feature type="compositionally biased region" description="Low complexity" evidence="3">
    <location>
        <begin position="461"/>
        <end position="478"/>
    </location>
</feature>
<feature type="compositionally biased region" description="Pro residues" evidence="3">
    <location>
        <begin position="505"/>
        <end position="525"/>
    </location>
</feature>
<feature type="compositionally biased region" description="Low complexity" evidence="3">
    <location>
        <begin position="639"/>
        <end position="659"/>
    </location>
</feature>
<feature type="compositionally biased region" description="Polar residues" evidence="3">
    <location>
        <begin position="718"/>
        <end position="741"/>
    </location>
</feature>
<feature type="compositionally biased region" description="Basic and acidic residues" evidence="3">
    <location>
        <begin position="961"/>
        <end position="973"/>
    </location>
</feature>
<feature type="compositionally biased region" description="Low complexity" evidence="3">
    <location>
        <begin position="1009"/>
        <end position="1020"/>
    </location>
</feature>
<feature type="compositionally biased region" description="Low complexity" evidence="3">
    <location>
        <begin position="1056"/>
        <end position="1069"/>
    </location>
</feature>
<feature type="compositionally biased region" description="Basic and acidic residues" evidence="3">
    <location>
        <begin position="1164"/>
        <end position="1179"/>
    </location>
</feature>
<feature type="modified residue" description="Phosphoserine" evidence="5">
    <location>
        <position position="1158"/>
    </location>
</feature>
<feature type="sequence conflict" description="In Ref. 4; BAC85608." evidence="4" ref="4">
    <original>T</original>
    <variation>A</variation>
    <location>
        <position position="741"/>
    </location>
</feature>
<gene>
    <name type="primary">ZC3H6</name>
    <name type="synonym">KIAA2035</name>
    <name type="synonym">ZC3HDC6</name>
</gene>
<proteinExistence type="evidence at protein level"/>
<dbReference type="EMBL" id="AC115115">
    <property type="status" value="NOT_ANNOTATED_CDS"/>
    <property type="molecule type" value="Genomic_DNA"/>
</dbReference>
<dbReference type="EMBL" id="AB111887">
    <property type="protein sequence ID" value="BAC98375.1"/>
    <property type="molecule type" value="mRNA"/>
</dbReference>
<dbReference type="EMBL" id="BC155540">
    <property type="protein sequence ID" value="AAI55541.1"/>
    <property type="molecule type" value="mRNA"/>
</dbReference>
<dbReference type="EMBL" id="BC167154">
    <property type="protein sequence ID" value="AAI67154.1"/>
    <property type="molecule type" value="mRNA"/>
</dbReference>
<dbReference type="EMBL" id="AK123404">
    <property type="protein sequence ID" value="BAC85608.1"/>
    <property type="status" value="ALT_INIT"/>
    <property type="molecule type" value="mRNA"/>
</dbReference>
<dbReference type="EMBL" id="AK127776">
    <property type="protein sequence ID" value="BAC87128.1"/>
    <property type="status" value="ALT_SEQ"/>
    <property type="molecule type" value="mRNA"/>
</dbReference>
<dbReference type="CCDS" id="CCDS46393.1"/>
<dbReference type="RefSeq" id="NP_940983.2">
    <property type="nucleotide sequence ID" value="NM_198581.3"/>
</dbReference>
<dbReference type="BioGRID" id="132014">
    <property type="interactions" value="11"/>
</dbReference>
<dbReference type="FunCoup" id="P61129">
    <property type="interactions" value="1081"/>
</dbReference>
<dbReference type="IntAct" id="P61129">
    <property type="interactions" value="2"/>
</dbReference>
<dbReference type="STRING" id="9606.ENSP00000386764"/>
<dbReference type="GlyCosmos" id="P61129">
    <property type="glycosylation" value="1 site, 1 glycan"/>
</dbReference>
<dbReference type="GlyGen" id="P61129">
    <property type="glycosylation" value="3 sites, 2 O-linked glycans (2 sites)"/>
</dbReference>
<dbReference type="iPTMnet" id="P61129"/>
<dbReference type="PhosphoSitePlus" id="P61129"/>
<dbReference type="SwissPalm" id="P61129"/>
<dbReference type="BioMuta" id="ZC3H6"/>
<dbReference type="DMDM" id="332278115"/>
<dbReference type="jPOST" id="P61129"/>
<dbReference type="MassIVE" id="P61129"/>
<dbReference type="PaxDb" id="9606-ENSP00000386764"/>
<dbReference type="PeptideAtlas" id="P61129"/>
<dbReference type="ProteomicsDB" id="57267"/>
<dbReference type="Pumba" id="P61129"/>
<dbReference type="Antibodypedia" id="47909">
    <property type="antibodies" value="16 antibodies from 7 providers"/>
</dbReference>
<dbReference type="DNASU" id="376940"/>
<dbReference type="Ensembl" id="ENST00000409871.6">
    <property type="protein sequence ID" value="ENSP00000386764.1"/>
    <property type="gene ID" value="ENSG00000188177.15"/>
</dbReference>
<dbReference type="GeneID" id="376940"/>
<dbReference type="KEGG" id="hsa:376940"/>
<dbReference type="MANE-Select" id="ENST00000409871.6">
    <property type="protein sequence ID" value="ENSP00000386764.1"/>
    <property type="RefSeq nucleotide sequence ID" value="NM_198581.3"/>
    <property type="RefSeq protein sequence ID" value="NP_940983.2"/>
</dbReference>
<dbReference type="UCSC" id="uc002thq.2">
    <property type="organism name" value="human"/>
</dbReference>
<dbReference type="AGR" id="HGNC:24762"/>
<dbReference type="CTD" id="376940"/>
<dbReference type="GeneCards" id="ZC3H6"/>
<dbReference type="HGNC" id="HGNC:24762">
    <property type="gene designation" value="ZC3H6"/>
</dbReference>
<dbReference type="HPA" id="ENSG00000188177">
    <property type="expression patterns" value="Low tissue specificity"/>
</dbReference>
<dbReference type="neXtProt" id="NX_P61129"/>
<dbReference type="OpenTargets" id="ENSG00000188177"/>
<dbReference type="PharmGKB" id="PA142670510"/>
<dbReference type="VEuPathDB" id="HostDB:ENSG00000188177"/>
<dbReference type="eggNOG" id="KOG1040">
    <property type="taxonomic scope" value="Eukaryota"/>
</dbReference>
<dbReference type="GeneTree" id="ENSGT00940000157396"/>
<dbReference type="HOGENOM" id="CLU_008238_0_0_1"/>
<dbReference type="InParanoid" id="P61129"/>
<dbReference type="OMA" id="RGMKQQQ"/>
<dbReference type="OrthoDB" id="411372at2759"/>
<dbReference type="PAN-GO" id="P61129">
    <property type="GO annotations" value="1 GO annotation based on evolutionary models"/>
</dbReference>
<dbReference type="PhylomeDB" id="P61129"/>
<dbReference type="TreeFam" id="TF321641"/>
<dbReference type="PathwayCommons" id="P61129"/>
<dbReference type="SignaLink" id="P61129"/>
<dbReference type="BioGRID-ORCS" id="376940">
    <property type="hits" value="10 hits in 1158 CRISPR screens"/>
</dbReference>
<dbReference type="CD-CODE" id="1A18FFC4">
    <property type="entry name" value="Paraspeckle"/>
</dbReference>
<dbReference type="ChiTaRS" id="ZC3H6">
    <property type="organism name" value="human"/>
</dbReference>
<dbReference type="GenomeRNAi" id="376940"/>
<dbReference type="Pharos" id="P61129">
    <property type="development level" value="Tdark"/>
</dbReference>
<dbReference type="PRO" id="PR:P61129"/>
<dbReference type="Proteomes" id="UP000005640">
    <property type="component" value="Chromosome 2"/>
</dbReference>
<dbReference type="RNAct" id="P61129">
    <property type="molecule type" value="protein"/>
</dbReference>
<dbReference type="Bgee" id="ENSG00000188177">
    <property type="expression patterns" value="Expressed in calcaneal tendon and 183 other cell types or tissues"/>
</dbReference>
<dbReference type="GO" id="GO:0000785">
    <property type="term" value="C:chromatin"/>
    <property type="evidence" value="ECO:0000247"/>
    <property type="project" value="NTNU_SB"/>
</dbReference>
<dbReference type="GO" id="GO:0005634">
    <property type="term" value="C:nucleus"/>
    <property type="evidence" value="ECO:0000318"/>
    <property type="project" value="GO_Central"/>
</dbReference>
<dbReference type="GO" id="GO:0003723">
    <property type="term" value="F:RNA binding"/>
    <property type="evidence" value="ECO:0007669"/>
    <property type="project" value="InterPro"/>
</dbReference>
<dbReference type="GO" id="GO:0008270">
    <property type="term" value="F:zinc ion binding"/>
    <property type="evidence" value="ECO:0007669"/>
    <property type="project" value="UniProtKB-KW"/>
</dbReference>
<dbReference type="GO" id="GO:0045892">
    <property type="term" value="P:negative regulation of DNA-templated transcription"/>
    <property type="evidence" value="ECO:0007669"/>
    <property type="project" value="InterPro"/>
</dbReference>
<dbReference type="FunFam" id="4.10.1000.10:FF:000007">
    <property type="entry name" value="Zinc finger CCCH domain-containing protein 6"/>
    <property type="match status" value="1"/>
</dbReference>
<dbReference type="Gene3D" id="1.20.120.1350">
    <property type="entry name" value="Pneumovirus matrix protein 2 (M2), zinc-binding domain"/>
    <property type="match status" value="1"/>
</dbReference>
<dbReference type="Gene3D" id="4.10.1000.10">
    <property type="entry name" value="Zinc finger, CCCH-type"/>
    <property type="match status" value="1"/>
</dbReference>
<dbReference type="InterPro" id="IPR045124">
    <property type="entry name" value="Su(sable)-like"/>
</dbReference>
<dbReference type="InterPro" id="IPR054361">
    <property type="entry name" value="Znf-CCCH_ZC3H4/6/8"/>
</dbReference>
<dbReference type="InterPro" id="IPR000571">
    <property type="entry name" value="Znf_CCCH"/>
</dbReference>
<dbReference type="InterPro" id="IPR036855">
    <property type="entry name" value="Znf_CCCH_sf"/>
</dbReference>
<dbReference type="PANTHER" id="PTHR13119">
    <property type="entry name" value="ZINC FINGER CCCH DOMAIN-CONTAINING PROTEI"/>
    <property type="match status" value="1"/>
</dbReference>
<dbReference type="PANTHER" id="PTHR13119:SF22">
    <property type="entry name" value="ZINC FINGER CCCH DOMAIN-CONTAINING PROTEIN 6"/>
    <property type="match status" value="1"/>
</dbReference>
<dbReference type="Pfam" id="PF00642">
    <property type="entry name" value="zf-CCCH"/>
    <property type="match status" value="1"/>
</dbReference>
<dbReference type="Pfam" id="PF22623">
    <property type="entry name" value="zf-CCCH_9"/>
    <property type="match status" value="1"/>
</dbReference>
<dbReference type="Pfam" id="PF18345">
    <property type="entry name" value="zf_CCCH_4"/>
    <property type="match status" value="1"/>
</dbReference>
<dbReference type="SMART" id="SM00356">
    <property type="entry name" value="ZnF_C3H1"/>
    <property type="match status" value="3"/>
</dbReference>
<dbReference type="SUPFAM" id="SSF90229">
    <property type="entry name" value="CCCH zinc finger"/>
    <property type="match status" value="3"/>
</dbReference>
<dbReference type="PROSITE" id="PS50103">
    <property type="entry name" value="ZF_C3H1"/>
    <property type="match status" value="3"/>
</dbReference>
<organism>
    <name type="scientific">Homo sapiens</name>
    <name type="common">Human</name>
    <dbReference type="NCBI Taxonomy" id="9606"/>
    <lineage>
        <taxon>Eukaryota</taxon>
        <taxon>Metazoa</taxon>
        <taxon>Chordata</taxon>
        <taxon>Craniata</taxon>
        <taxon>Vertebrata</taxon>
        <taxon>Euteleostomi</taxon>
        <taxon>Mammalia</taxon>
        <taxon>Eutheria</taxon>
        <taxon>Euarchontoglires</taxon>
        <taxon>Primates</taxon>
        <taxon>Haplorrhini</taxon>
        <taxon>Catarrhini</taxon>
        <taxon>Hominidae</taxon>
        <taxon>Homo</taxon>
    </lineage>
</organism>